<name>YMDB_ESCF3</name>
<organism>
    <name type="scientific">Escherichia fergusonii (strain ATCC 35469 / DSM 13698 / CCUG 18766 / IAM 14443 / JCM 21226 / LMG 7866 / NBRC 102419 / NCTC 12128 / CDC 0568-73)</name>
    <dbReference type="NCBI Taxonomy" id="585054"/>
    <lineage>
        <taxon>Bacteria</taxon>
        <taxon>Pseudomonadati</taxon>
        <taxon>Pseudomonadota</taxon>
        <taxon>Gammaproteobacteria</taxon>
        <taxon>Enterobacterales</taxon>
        <taxon>Enterobacteriaceae</taxon>
        <taxon>Escherichia</taxon>
    </lineage>
</organism>
<feature type="chain" id="PRO_0000409478" description="O-acetyl-ADP-ribose deacetylase">
    <location>
        <begin position="1"/>
        <end position="177"/>
    </location>
</feature>
<feature type="domain" description="Macro" evidence="1">
    <location>
        <begin position="1"/>
        <end position="175"/>
    </location>
</feature>
<feature type="active site" description="Proton acceptor" evidence="1">
    <location>
        <position position="35"/>
    </location>
</feature>
<feature type="binding site" evidence="1">
    <location>
        <begin position="11"/>
        <end position="12"/>
    </location>
    <ligand>
        <name>substrate</name>
    </ligand>
</feature>
<feature type="binding site" evidence="1">
    <location>
        <position position="25"/>
    </location>
    <ligand>
        <name>substrate</name>
    </ligand>
</feature>
<feature type="binding site" evidence="1">
    <location>
        <begin position="33"/>
        <end position="35"/>
    </location>
    <ligand>
        <name>substrate</name>
    </ligand>
</feature>
<feature type="binding site" evidence="1">
    <location>
        <begin position="122"/>
        <end position="126"/>
    </location>
    <ligand>
        <name>substrate</name>
    </ligand>
</feature>
<evidence type="ECO:0000255" key="1">
    <source>
        <dbReference type="HAMAP-Rule" id="MF_01205"/>
    </source>
</evidence>
<evidence type="ECO:0000305" key="2"/>
<keyword id="KW-0378">Hydrolase</keyword>
<reference key="1">
    <citation type="journal article" date="2009" name="PLoS Genet.">
        <title>Organised genome dynamics in the Escherichia coli species results in highly diverse adaptive paths.</title>
        <authorList>
            <person name="Touchon M."/>
            <person name="Hoede C."/>
            <person name="Tenaillon O."/>
            <person name="Barbe V."/>
            <person name="Baeriswyl S."/>
            <person name="Bidet P."/>
            <person name="Bingen E."/>
            <person name="Bonacorsi S."/>
            <person name="Bouchier C."/>
            <person name="Bouvet O."/>
            <person name="Calteau A."/>
            <person name="Chiapello H."/>
            <person name="Clermont O."/>
            <person name="Cruveiller S."/>
            <person name="Danchin A."/>
            <person name="Diard M."/>
            <person name="Dossat C."/>
            <person name="Karoui M.E."/>
            <person name="Frapy E."/>
            <person name="Garry L."/>
            <person name="Ghigo J.M."/>
            <person name="Gilles A.M."/>
            <person name="Johnson J."/>
            <person name="Le Bouguenec C."/>
            <person name="Lescat M."/>
            <person name="Mangenot S."/>
            <person name="Martinez-Jehanne V."/>
            <person name="Matic I."/>
            <person name="Nassif X."/>
            <person name="Oztas S."/>
            <person name="Petit M.A."/>
            <person name="Pichon C."/>
            <person name="Rouy Z."/>
            <person name="Ruf C.S."/>
            <person name="Schneider D."/>
            <person name="Tourret J."/>
            <person name="Vacherie B."/>
            <person name="Vallenet D."/>
            <person name="Medigue C."/>
            <person name="Rocha E.P.C."/>
            <person name="Denamur E."/>
        </authorList>
    </citation>
    <scope>NUCLEOTIDE SEQUENCE [LARGE SCALE GENOMIC DNA]</scope>
    <source>
        <strain>ATCC 35469 / DSM 13698 / BCRC 15582 / CCUG 18766 / IAM 14443 / JCM 21226 / LMG 7866 / NBRC 102419 / NCTC 12128 / CDC 0568-73</strain>
    </source>
</reference>
<proteinExistence type="inferred from homology"/>
<comment type="function">
    <text evidence="1">Deacetylates O-acetyl-ADP ribose to yield ADP-ribose and free acetate. Down-regulates ribonuclease 3 (RNase III) activity. Acts by interacting directly with the region of the ribonuclease that is required for dimerization/activation.</text>
</comment>
<comment type="catalytic activity">
    <reaction evidence="1">
        <text>3''-O-acetyl-ADP-D-ribose + H2O = ADP-D-ribose + acetate + H(+)</text>
        <dbReference type="Rhea" id="RHEA:59244"/>
        <dbReference type="ChEBI" id="CHEBI:15377"/>
        <dbReference type="ChEBI" id="CHEBI:15378"/>
        <dbReference type="ChEBI" id="CHEBI:30089"/>
        <dbReference type="ChEBI" id="CHEBI:57967"/>
        <dbReference type="ChEBI" id="CHEBI:142723"/>
        <dbReference type="EC" id="3.1.1.106"/>
    </reaction>
</comment>
<comment type="catalytic activity">
    <reaction evidence="1">
        <text>2''-O-acetyl-ADP-D-ribose + H2O = ADP-D-ribose + acetate + H(+)</text>
        <dbReference type="Rhea" id="RHEA:57060"/>
        <dbReference type="ChEBI" id="CHEBI:15377"/>
        <dbReference type="ChEBI" id="CHEBI:15378"/>
        <dbReference type="ChEBI" id="CHEBI:30089"/>
        <dbReference type="ChEBI" id="CHEBI:57967"/>
        <dbReference type="ChEBI" id="CHEBI:83767"/>
        <dbReference type="EC" id="3.1.1.106"/>
    </reaction>
</comment>
<comment type="subunit">
    <text evidence="1">Homodimer. Interacts with RNase III.</text>
</comment>
<comment type="similarity">
    <text evidence="1">Belongs to the MacroD-type family. YmdB subfamily.</text>
</comment>
<comment type="sequence caution" evidence="2">
    <conflict type="erroneous initiation">
        <sequence resource="EMBL-CDS" id="CAQ89394"/>
    </conflict>
    <text>Extended N-terminus.</text>
</comment>
<gene>
    <name evidence="1" type="primary">ymdB</name>
    <name type="ordered locus">EFER_1884</name>
</gene>
<accession>B7LT90</accession>
<sequence>MKSRIHVLQGDITQLAVDVIVNAANSSLMGGGGVDGAIHRAAGPELLEACQKVRRQQGECPTGHAVITIAGNLPARAVIHTVGPVWRDGEHNEDQLLHDAYLNSLKLAQANGYKSIAFPAISTGVYGFPRAAAAEIAVKTVSDFITRHALPEQIYFVCYDEENSRLYNRLLTQQGDE</sequence>
<protein>
    <recommendedName>
        <fullName evidence="1">O-acetyl-ADP-ribose deacetylase</fullName>
        <ecNumber evidence="1">3.1.1.106</ecNumber>
    </recommendedName>
    <alternativeName>
        <fullName evidence="1">Regulator of RNase III activity</fullName>
    </alternativeName>
</protein>
<dbReference type="EC" id="3.1.1.106" evidence="1"/>
<dbReference type="EMBL" id="CU928158">
    <property type="protein sequence ID" value="CAQ89394.1"/>
    <property type="status" value="ALT_INIT"/>
    <property type="molecule type" value="Genomic_DNA"/>
</dbReference>
<dbReference type="RefSeq" id="WP_000842232.1">
    <property type="nucleotide sequence ID" value="NC_011740.1"/>
</dbReference>
<dbReference type="SMR" id="B7LT90"/>
<dbReference type="GeneID" id="75057084"/>
<dbReference type="KEGG" id="efe:EFER_1884"/>
<dbReference type="HOGENOM" id="CLU_046550_5_1_6"/>
<dbReference type="OrthoDB" id="6194521at2"/>
<dbReference type="Proteomes" id="UP000000745">
    <property type="component" value="Chromosome"/>
</dbReference>
<dbReference type="GO" id="GO:0061463">
    <property type="term" value="F:O-acetyl-ADP-ribose deacetylase activity"/>
    <property type="evidence" value="ECO:0007669"/>
    <property type="project" value="UniProtKB-EC"/>
</dbReference>
<dbReference type="GO" id="GO:0001883">
    <property type="term" value="F:purine nucleoside binding"/>
    <property type="evidence" value="ECO:0007669"/>
    <property type="project" value="UniProtKB-UniRule"/>
</dbReference>
<dbReference type="GO" id="GO:0008428">
    <property type="term" value="F:ribonuclease inhibitor activity"/>
    <property type="evidence" value="ECO:0007669"/>
    <property type="project" value="UniProtKB-UniRule"/>
</dbReference>
<dbReference type="GO" id="GO:0042278">
    <property type="term" value="P:purine nucleoside metabolic process"/>
    <property type="evidence" value="ECO:0007669"/>
    <property type="project" value="UniProtKB-UniRule"/>
</dbReference>
<dbReference type="CDD" id="cd02908">
    <property type="entry name" value="Macro_OAADPr_deacetylase"/>
    <property type="match status" value="1"/>
</dbReference>
<dbReference type="Gene3D" id="3.40.220.10">
    <property type="entry name" value="Leucine Aminopeptidase, subunit E, domain 1"/>
    <property type="match status" value="1"/>
</dbReference>
<dbReference type="HAMAP" id="MF_01205">
    <property type="entry name" value="YmdB"/>
    <property type="match status" value="1"/>
</dbReference>
<dbReference type="InterPro" id="IPR002589">
    <property type="entry name" value="Macro_dom"/>
</dbReference>
<dbReference type="InterPro" id="IPR043472">
    <property type="entry name" value="Macro_dom-like"/>
</dbReference>
<dbReference type="InterPro" id="IPR024900">
    <property type="entry name" value="O-Ac-ADP-ribose_deAcase"/>
</dbReference>
<dbReference type="NCBIfam" id="NF001660">
    <property type="entry name" value="PRK00431.1-1"/>
    <property type="match status" value="1"/>
</dbReference>
<dbReference type="NCBIfam" id="NF001664">
    <property type="entry name" value="PRK00431.1-6"/>
    <property type="match status" value="1"/>
</dbReference>
<dbReference type="PANTHER" id="PTHR11106">
    <property type="entry name" value="GANGLIOSIDE INDUCED DIFFERENTIATION ASSOCIATED PROTEIN 2-RELATED"/>
    <property type="match status" value="1"/>
</dbReference>
<dbReference type="PANTHER" id="PTHR11106:SF27">
    <property type="entry name" value="MACRO DOMAIN-CONTAINING PROTEIN"/>
    <property type="match status" value="1"/>
</dbReference>
<dbReference type="Pfam" id="PF01661">
    <property type="entry name" value="Macro"/>
    <property type="match status" value="1"/>
</dbReference>
<dbReference type="SMART" id="SM00506">
    <property type="entry name" value="A1pp"/>
    <property type="match status" value="1"/>
</dbReference>
<dbReference type="SUPFAM" id="SSF52949">
    <property type="entry name" value="Macro domain-like"/>
    <property type="match status" value="1"/>
</dbReference>
<dbReference type="PROSITE" id="PS51154">
    <property type="entry name" value="MACRO"/>
    <property type="match status" value="1"/>
</dbReference>